<organism>
    <name type="scientific">Yersinia pestis bv. Antiqua (strain Angola)</name>
    <dbReference type="NCBI Taxonomy" id="349746"/>
    <lineage>
        <taxon>Bacteria</taxon>
        <taxon>Pseudomonadati</taxon>
        <taxon>Pseudomonadota</taxon>
        <taxon>Gammaproteobacteria</taxon>
        <taxon>Enterobacterales</taxon>
        <taxon>Yersiniaceae</taxon>
        <taxon>Yersinia</taxon>
    </lineage>
</organism>
<comment type="function">
    <text evidence="1">Dual-specificity methyltransferase that catalyzes the formation of 5-methyluridine at position 54 (m5U54) in all tRNAs, and that of position 341 (m5U341) in tmRNA (transfer-mRNA).</text>
</comment>
<comment type="catalytic activity">
    <reaction evidence="1">
        <text>uridine(54) in tRNA + S-adenosyl-L-methionine = 5-methyluridine(54) in tRNA + S-adenosyl-L-homocysteine + H(+)</text>
        <dbReference type="Rhea" id="RHEA:42712"/>
        <dbReference type="Rhea" id="RHEA-COMP:10167"/>
        <dbReference type="Rhea" id="RHEA-COMP:10193"/>
        <dbReference type="ChEBI" id="CHEBI:15378"/>
        <dbReference type="ChEBI" id="CHEBI:57856"/>
        <dbReference type="ChEBI" id="CHEBI:59789"/>
        <dbReference type="ChEBI" id="CHEBI:65315"/>
        <dbReference type="ChEBI" id="CHEBI:74447"/>
        <dbReference type="EC" id="2.1.1.35"/>
    </reaction>
</comment>
<comment type="catalytic activity">
    <reaction evidence="1">
        <text>uridine(341) in tmRNA + S-adenosyl-L-methionine = 5-methyluridine(341) in tmRNA + S-adenosyl-L-homocysteine + H(+)</text>
        <dbReference type="Rhea" id="RHEA:43612"/>
        <dbReference type="Rhea" id="RHEA-COMP:10630"/>
        <dbReference type="Rhea" id="RHEA-COMP:10631"/>
        <dbReference type="ChEBI" id="CHEBI:15378"/>
        <dbReference type="ChEBI" id="CHEBI:57856"/>
        <dbReference type="ChEBI" id="CHEBI:59789"/>
        <dbReference type="ChEBI" id="CHEBI:65315"/>
        <dbReference type="ChEBI" id="CHEBI:74447"/>
    </reaction>
</comment>
<comment type="similarity">
    <text evidence="1">Belongs to the class I-like SAM-binding methyltransferase superfamily. RNA M5U methyltransferase family. TrmA subfamily.</text>
</comment>
<dbReference type="EC" id="2.1.1.-" evidence="1"/>
<dbReference type="EC" id="2.1.1.35" evidence="1"/>
<dbReference type="EMBL" id="CP000901">
    <property type="protein sequence ID" value="ABX86986.1"/>
    <property type="molecule type" value="Genomic_DNA"/>
</dbReference>
<dbReference type="RefSeq" id="WP_002209474.1">
    <property type="nucleotide sequence ID" value="NZ_CP009935.1"/>
</dbReference>
<dbReference type="SMR" id="A9R6N8"/>
<dbReference type="GeneID" id="57974789"/>
<dbReference type="KEGG" id="ypg:YpAngola_A0122"/>
<dbReference type="PATRIC" id="fig|349746.12.peg.1067"/>
<dbReference type="GO" id="GO:0005829">
    <property type="term" value="C:cytosol"/>
    <property type="evidence" value="ECO:0007669"/>
    <property type="project" value="TreeGrafter"/>
</dbReference>
<dbReference type="GO" id="GO:0019843">
    <property type="term" value="F:rRNA binding"/>
    <property type="evidence" value="ECO:0007669"/>
    <property type="project" value="TreeGrafter"/>
</dbReference>
<dbReference type="GO" id="GO:0030697">
    <property type="term" value="F:tRNA (uracil(54)-C5)-methyltransferase activity, S-adenosyl methionine-dependent"/>
    <property type="evidence" value="ECO:0007669"/>
    <property type="project" value="UniProtKB-UniRule"/>
</dbReference>
<dbReference type="GO" id="GO:0000049">
    <property type="term" value="F:tRNA binding"/>
    <property type="evidence" value="ECO:0007669"/>
    <property type="project" value="TreeGrafter"/>
</dbReference>
<dbReference type="GO" id="GO:0030488">
    <property type="term" value="P:tRNA methylation"/>
    <property type="evidence" value="ECO:0007669"/>
    <property type="project" value="UniProtKB-UniRule"/>
</dbReference>
<dbReference type="CDD" id="cd02440">
    <property type="entry name" value="AdoMet_MTases"/>
    <property type="match status" value="1"/>
</dbReference>
<dbReference type="FunFam" id="2.40.50.1070:FF:000001">
    <property type="entry name" value="tRNA/tmRNA (uracil-C(5))-methyltransferase"/>
    <property type="match status" value="1"/>
</dbReference>
<dbReference type="FunFam" id="3.40.50.150:FF:000012">
    <property type="entry name" value="tRNA/tmRNA (uracil-C(5))-methyltransferase"/>
    <property type="match status" value="1"/>
</dbReference>
<dbReference type="Gene3D" id="2.40.50.1070">
    <property type="match status" value="1"/>
</dbReference>
<dbReference type="Gene3D" id="3.40.50.150">
    <property type="entry name" value="Vaccinia Virus protein VP39"/>
    <property type="match status" value="1"/>
</dbReference>
<dbReference type="HAMAP" id="MF_01011">
    <property type="entry name" value="RNA_methyltr_TrmA"/>
    <property type="match status" value="1"/>
</dbReference>
<dbReference type="InterPro" id="IPR030390">
    <property type="entry name" value="MeTrfase_TrmA_AS"/>
</dbReference>
<dbReference type="InterPro" id="IPR030391">
    <property type="entry name" value="MeTrfase_TrmA_CS"/>
</dbReference>
<dbReference type="InterPro" id="IPR029063">
    <property type="entry name" value="SAM-dependent_MTases_sf"/>
</dbReference>
<dbReference type="InterPro" id="IPR011869">
    <property type="entry name" value="TrmA_MeTrfase"/>
</dbReference>
<dbReference type="InterPro" id="IPR010280">
    <property type="entry name" value="U5_MeTrfase_fam"/>
</dbReference>
<dbReference type="NCBIfam" id="TIGR02143">
    <property type="entry name" value="trmA_only"/>
    <property type="match status" value="1"/>
</dbReference>
<dbReference type="PANTHER" id="PTHR47790">
    <property type="entry name" value="TRNA/TMRNA (URACIL-C(5))-METHYLTRANSFERASE"/>
    <property type="match status" value="1"/>
</dbReference>
<dbReference type="PANTHER" id="PTHR47790:SF2">
    <property type="entry name" value="TRNA_TMRNA (URACIL-C(5))-METHYLTRANSFERASE"/>
    <property type="match status" value="1"/>
</dbReference>
<dbReference type="Pfam" id="PF05958">
    <property type="entry name" value="tRNA_U5-meth_tr"/>
    <property type="match status" value="1"/>
</dbReference>
<dbReference type="SUPFAM" id="SSF53335">
    <property type="entry name" value="S-adenosyl-L-methionine-dependent methyltransferases"/>
    <property type="match status" value="1"/>
</dbReference>
<dbReference type="PROSITE" id="PS51687">
    <property type="entry name" value="SAM_MT_RNA_M5U"/>
    <property type="match status" value="1"/>
</dbReference>
<dbReference type="PROSITE" id="PS01230">
    <property type="entry name" value="TRMA_1"/>
    <property type="match status" value="1"/>
</dbReference>
<dbReference type="PROSITE" id="PS01231">
    <property type="entry name" value="TRMA_2"/>
    <property type="match status" value="1"/>
</dbReference>
<sequence>MTPNILPIESYDHQLAEKSARLKAMMLPFQAPEPEIFRSPADHYRMRAEFRVWHDEDDLYHIMFDQQTKQRIRVEQFPVASRLINRLMDALMTAIRAEPLLRRKLFQIDYLSTLSGKLIASLLYHRQLDEEWQQKALELRDQLRAQGFDLQLIGRAAKTKIMLDHDYIDEVLPVAGREMIYRQVENSFTQPNAAVNIHMLEWALDVTQGATGDLLELYCGNGNFSLALARNFERVLATEIAKPSVAAAQYNIAANNIDNVQIIRMSAEEFTQAMQGVREFNRLKGIDLGSYNCETIFVDPPRSGLDHETVKLVQAYPRILYISCNPETLCANLEQLQHTHKISRLALFDQFPYTHHMECGVLLEKRH</sequence>
<name>TRMA_YERPG</name>
<protein>
    <recommendedName>
        <fullName evidence="1">tRNA/tmRNA (uracil-C(5))-methyltransferase</fullName>
        <ecNumber evidence="1">2.1.1.-</ecNumber>
        <ecNumber evidence="1">2.1.1.35</ecNumber>
    </recommendedName>
    <alternativeName>
        <fullName evidence="1">tRNA (uracil(54)-C(5))-methyltransferase</fullName>
    </alternativeName>
    <alternativeName>
        <fullName evidence="1">tRNA(m5U54)-methyltransferase</fullName>
        <shortName evidence="1">RUMT</shortName>
    </alternativeName>
    <alternativeName>
        <fullName evidence="1">tmRNA (uracil(341)-C(5))-methyltransferase</fullName>
    </alternativeName>
</protein>
<reference key="1">
    <citation type="journal article" date="2010" name="J. Bacteriol.">
        <title>Genome sequence of the deep-rooted Yersinia pestis strain Angola reveals new insights into the evolution and pangenome of the plague bacterium.</title>
        <authorList>
            <person name="Eppinger M."/>
            <person name="Worsham P.L."/>
            <person name="Nikolich M.P."/>
            <person name="Riley D.R."/>
            <person name="Sebastian Y."/>
            <person name="Mou S."/>
            <person name="Achtman M."/>
            <person name="Lindler L.E."/>
            <person name="Ravel J."/>
        </authorList>
    </citation>
    <scope>NUCLEOTIDE SEQUENCE [LARGE SCALE GENOMIC DNA]</scope>
    <source>
        <strain>Angola</strain>
    </source>
</reference>
<keyword id="KW-0489">Methyltransferase</keyword>
<keyword id="KW-0949">S-adenosyl-L-methionine</keyword>
<keyword id="KW-0808">Transferase</keyword>
<keyword id="KW-0819">tRNA processing</keyword>
<gene>
    <name evidence="1" type="primary">trmA</name>
    <name type="ordered locus">YpAngola_A0122</name>
</gene>
<feature type="chain" id="PRO_1000198561" description="tRNA/tmRNA (uracil-C(5))-methyltransferase">
    <location>
        <begin position="1"/>
        <end position="367"/>
    </location>
</feature>
<feature type="active site" description="Nucleophile" evidence="1">
    <location>
        <position position="324"/>
    </location>
</feature>
<feature type="active site" description="Proton acceptor" evidence="1">
    <location>
        <position position="358"/>
    </location>
</feature>
<feature type="binding site" evidence="1">
    <location>
        <position position="190"/>
    </location>
    <ligand>
        <name>S-adenosyl-L-methionine</name>
        <dbReference type="ChEBI" id="CHEBI:59789"/>
    </ligand>
</feature>
<feature type="binding site" evidence="1">
    <location>
        <position position="218"/>
    </location>
    <ligand>
        <name>S-adenosyl-L-methionine</name>
        <dbReference type="ChEBI" id="CHEBI:59789"/>
    </ligand>
</feature>
<feature type="binding site" evidence="1">
    <location>
        <position position="223"/>
    </location>
    <ligand>
        <name>S-adenosyl-L-methionine</name>
        <dbReference type="ChEBI" id="CHEBI:59789"/>
    </ligand>
</feature>
<feature type="binding site" evidence="1">
    <location>
        <position position="239"/>
    </location>
    <ligand>
        <name>S-adenosyl-L-methionine</name>
        <dbReference type="ChEBI" id="CHEBI:59789"/>
    </ligand>
</feature>
<feature type="binding site" evidence="1">
    <location>
        <position position="299"/>
    </location>
    <ligand>
        <name>S-adenosyl-L-methionine</name>
        <dbReference type="ChEBI" id="CHEBI:59789"/>
    </ligand>
</feature>
<evidence type="ECO:0000255" key="1">
    <source>
        <dbReference type="HAMAP-Rule" id="MF_01011"/>
    </source>
</evidence>
<proteinExistence type="inferred from homology"/>
<accession>A9R6N8</accession>